<comment type="function">
    <text>Involved in early stages of root nodule development.</text>
</comment>
<comment type="induction">
    <text>During nodulation in legume roots after Rhizobium infection.</text>
</comment>
<comment type="similarity">
    <text evidence="2">Belongs to the nodulin 75 family.</text>
</comment>
<feature type="chain" id="PRO_0000213730" description="Early nodulin-75">
    <location>
        <begin position="1" status="less than"/>
        <end position="97" status="greater than"/>
    </location>
</feature>
<feature type="region of interest" description="Disordered" evidence="1">
    <location>
        <begin position="1"/>
        <end position="97"/>
    </location>
</feature>
<feature type="compositionally biased region" description="Pro residues" evidence="1">
    <location>
        <begin position="9"/>
        <end position="22"/>
    </location>
</feature>
<feature type="compositionally biased region" description="Pro residues" evidence="1">
    <location>
        <begin position="31"/>
        <end position="43"/>
    </location>
</feature>
<feature type="compositionally biased region" description="Basic and acidic residues" evidence="1">
    <location>
        <begin position="76"/>
        <end position="97"/>
    </location>
</feature>
<feature type="non-terminal residue">
    <location>
        <position position="1"/>
    </location>
</feature>
<feature type="non-terminal residue">
    <location>
        <position position="97"/>
    </location>
</feature>
<sequence length="97" mass="11427">RPHVHPPPEHQPPLEHPPPEYQPPHEKPPHVHPPPEYQPPYQKPPHEKSPYEPPPQEYQPPHEKPPQVKPPSEYQPPHEKPPHEHPPPEYQPPHEKP</sequence>
<protein>
    <recommendedName>
        <fullName>Early nodulin-75</fullName>
        <shortName>N-75</shortName>
    </recommendedName>
    <alternativeName>
        <fullName>NGM-75</fullName>
    </alternativeName>
</protein>
<keyword id="KW-0536">Nodulation</keyword>
<keyword id="KW-0677">Repeat</keyword>
<gene>
    <name type="primary">ENOD2</name>
</gene>
<dbReference type="EMBL" id="X12580">
    <property type="protein sequence ID" value="CAA31092.1"/>
    <property type="molecule type" value="mRNA"/>
</dbReference>
<dbReference type="PIR" id="S04554">
    <property type="entry name" value="S04554"/>
</dbReference>
<dbReference type="GO" id="GO:0009877">
    <property type="term" value="P:nodulation"/>
    <property type="evidence" value="ECO:0007669"/>
    <property type="project" value="UniProtKB-KW"/>
</dbReference>
<dbReference type="PRINTS" id="PR01217">
    <property type="entry name" value="PRICHEXTENSN"/>
</dbReference>
<proteinExistence type="evidence at transcript level"/>
<name>NO75_MEDSA</name>
<organism>
    <name type="scientific">Medicago sativa</name>
    <name type="common">Alfalfa</name>
    <dbReference type="NCBI Taxonomy" id="3879"/>
    <lineage>
        <taxon>Eukaryota</taxon>
        <taxon>Viridiplantae</taxon>
        <taxon>Streptophyta</taxon>
        <taxon>Embryophyta</taxon>
        <taxon>Tracheophyta</taxon>
        <taxon>Spermatophyta</taxon>
        <taxon>Magnoliopsida</taxon>
        <taxon>eudicotyledons</taxon>
        <taxon>Gunneridae</taxon>
        <taxon>Pentapetalae</taxon>
        <taxon>rosids</taxon>
        <taxon>fabids</taxon>
        <taxon>Fabales</taxon>
        <taxon>Fabaceae</taxon>
        <taxon>Papilionoideae</taxon>
        <taxon>50 kb inversion clade</taxon>
        <taxon>NPAAA clade</taxon>
        <taxon>Hologalegina</taxon>
        <taxon>IRL clade</taxon>
        <taxon>Trifolieae</taxon>
        <taxon>Medicago</taxon>
    </lineage>
</organism>
<evidence type="ECO:0000256" key="1">
    <source>
        <dbReference type="SAM" id="MobiDB-lite"/>
    </source>
</evidence>
<evidence type="ECO:0000305" key="2"/>
<accession>P11728</accession>
<reference key="1">
    <citation type="journal article" date="1988" name="Genes Dev.">
        <title>Expression of nodule-specific genes in alfalfa root nodules blocked at an early stage of development.</title>
        <authorList>
            <person name="Dickstein R."/>
            <person name="Bisseling T."/>
            <person name="Reinhold V.N."/>
            <person name="Ausubel F.M."/>
        </authorList>
    </citation>
    <scope>NUCLEOTIDE SEQUENCE [MRNA]</scope>
    <source>
        <tissue>Root nodule</tissue>
    </source>
</reference>